<evidence type="ECO:0000255" key="1">
    <source>
        <dbReference type="HAMAP-Rule" id="MF_00586"/>
    </source>
</evidence>
<evidence type="ECO:0000255" key="2">
    <source>
        <dbReference type="PROSITE-ProRule" id="PRU01068"/>
    </source>
</evidence>
<feature type="chain" id="PRO_1000072590" description="Glutamyl-tRNA(Gln) amidotransferase subunit D">
    <location>
        <begin position="1"/>
        <end position="439"/>
    </location>
</feature>
<feature type="domain" description="Asparaginase/glutaminase" evidence="2">
    <location>
        <begin position="88"/>
        <end position="419"/>
    </location>
</feature>
<feature type="active site" evidence="1">
    <location>
        <position position="98"/>
    </location>
</feature>
<feature type="active site" evidence="1">
    <location>
        <position position="174"/>
    </location>
</feature>
<feature type="active site" evidence="1">
    <location>
        <position position="175"/>
    </location>
</feature>
<feature type="active site" evidence="1">
    <location>
        <position position="253"/>
    </location>
</feature>
<gene>
    <name evidence="1" type="primary">gatD</name>
    <name type="ordered locus">Msed_1720</name>
</gene>
<protein>
    <recommendedName>
        <fullName evidence="1">Glutamyl-tRNA(Gln) amidotransferase subunit D</fullName>
        <shortName evidence="1">Glu-ADT subunit D</shortName>
        <ecNumber evidence="1">6.3.5.-</ecNumber>
    </recommendedName>
</protein>
<dbReference type="EC" id="6.3.5.-" evidence="1"/>
<dbReference type="EMBL" id="CP000682">
    <property type="protein sequence ID" value="ABP95875.1"/>
    <property type="molecule type" value="Genomic_DNA"/>
</dbReference>
<dbReference type="RefSeq" id="WP_012021662.1">
    <property type="nucleotide sequence ID" value="NC_009440.1"/>
</dbReference>
<dbReference type="SMR" id="A4YHH3"/>
<dbReference type="STRING" id="399549.Msed_1720"/>
<dbReference type="GeneID" id="91756232"/>
<dbReference type="KEGG" id="mse:Msed_1720"/>
<dbReference type="eggNOG" id="arCOG01924">
    <property type="taxonomic scope" value="Archaea"/>
</dbReference>
<dbReference type="HOGENOM" id="CLU_019134_2_1_2"/>
<dbReference type="Proteomes" id="UP000000242">
    <property type="component" value="Chromosome"/>
</dbReference>
<dbReference type="GO" id="GO:0004067">
    <property type="term" value="F:asparaginase activity"/>
    <property type="evidence" value="ECO:0007669"/>
    <property type="project" value="InterPro"/>
</dbReference>
<dbReference type="GO" id="GO:0005524">
    <property type="term" value="F:ATP binding"/>
    <property type="evidence" value="ECO:0007669"/>
    <property type="project" value="UniProtKB-KW"/>
</dbReference>
<dbReference type="GO" id="GO:0050567">
    <property type="term" value="F:glutaminyl-tRNA synthase (glutamine-hydrolyzing) activity"/>
    <property type="evidence" value="ECO:0007669"/>
    <property type="project" value="UniProtKB-UniRule"/>
</dbReference>
<dbReference type="GO" id="GO:0006520">
    <property type="term" value="P:amino acid metabolic process"/>
    <property type="evidence" value="ECO:0007669"/>
    <property type="project" value="InterPro"/>
</dbReference>
<dbReference type="GO" id="GO:0006450">
    <property type="term" value="P:regulation of translational fidelity"/>
    <property type="evidence" value="ECO:0007669"/>
    <property type="project" value="InterPro"/>
</dbReference>
<dbReference type="GO" id="GO:0006412">
    <property type="term" value="P:translation"/>
    <property type="evidence" value="ECO:0007669"/>
    <property type="project" value="UniProtKB-UniRule"/>
</dbReference>
<dbReference type="CDD" id="cd08962">
    <property type="entry name" value="GatD"/>
    <property type="match status" value="1"/>
</dbReference>
<dbReference type="Gene3D" id="2.30.30.520">
    <property type="match status" value="1"/>
</dbReference>
<dbReference type="Gene3D" id="3.40.50.40">
    <property type="match status" value="1"/>
</dbReference>
<dbReference type="Gene3D" id="3.40.50.1170">
    <property type="entry name" value="L-asparaginase, N-terminal domain"/>
    <property type="match status" value="1"/>
</dbReference>
<dbReference type="HAMAP" id="MF_00586">
    <property type="entry name" value="GatD"/>
    <property type="match status" value="1"/>
</dbReference>
<dbReference type="InterPro" id="IPR006033">
    <property type="entry name" value="AsnA_fam"/>
</dbReference>
<dbReference type="InterPro" id="IPR036152">
    <property type="entry name" value="Asp/glu_Ase-like_sf"/>
</dbReference>
<dbReference type="InterPro" id="IPR006034">
    <property type="entry name" value="Asparaginase/glutaminase-like"/>
</dbReference>
<dbReference type="InterPro" id="IPR027475">
    <property type="entry name" value="Asparaginase/glutaminase_AS2"/>
</dbReference>
<dbReference type="InterPro" id="IPR040919">
    <property type="entry name" value="Asparaginase_C"/>
</dbReference>
<dbReference type="InterPro" id="IPR011878">
    <property type="entry name" value="GatD"/>
</dbReference>
<dbReference type="InterPro" id="IPR040918">
    <property type="entry name" value="GatD_N"/>
</dbReference>
<dbReference type="InterPro" id="IPR037222">
    <property type="entry name" value="GatD_N_sf"/>
</dbReference>
<dbReference type="InterPro" id="IPR027473">
    <property type="entry name" value="L-asparaginase_C"/>
</dbReference>
<dbReference type="InterPro" id="IPR027474">
    <property type="entry name" value="L-asparaginase_N"/>
</dbReference>
<dbReference type="InterPro" id="IPR037152">
    <property type="entry name" value="L-asparaginase_N_sf"/>
</dbReference>
<dbReference type="NCBIfam" id="TIGR00519">
    <property type="entry name" value="asnASE_I"/>
    <property type="match status" value="1"/>
</dbReference>
<dbReference type="NCBIfam" id="TIGR02153">
    <property type="entry name" value="gatD_arch"/>
    <property type="match status" value="1"/>
</dbReference>
<dbReference type="NCBIfam" id="NF003217">
    <property type="entry name" value="PRK04183.1"/>
    <property type="match status" value="1"/>
</dbReference>
<dbReference type="PANTHER" id="PTHR11707:SF28">
    <property type="entry name" value="60 KDA LYSOPHOSPHOLIPASE"/>
    <property type="match status" value="1"/>
</dbReference>
<dbReference type="PANTHER" id="PTHR11707">
    <property type="entry name" value="L-ASPARAGINASE"/>
    <property type="match status" value="1"/>
</dbReference>
<dbReference type="Pfam" id="PF00710">
    <property type="entry name" value="Asparaginase"/>
    <property type="match status" value="1"/>
</dbReference>
<dbReference type="Pfam" id="PF17763">
    <property type="entry name" value="Asparaginase_C"/>
    <property type="match status" value="1"/>
</dbReference>
<dbReference type="Pfam" id="PF18195">
    <property type="entry name" value="GatD_N"/>
    <property type="match status" value="1"/>
</dbReference>
<dbReference type="PIRSF" id="PIRSF500175">
    <property type="entry name" value="Glu_ADT_D"/>
    <property type="match status" value="1"/>
</dbReference>
<dbReference type="PIRSF" id="PIRSF001220">
    <property type="entry name" value="L-ASNase_gatD"/>
    <property type="match status" value="1"/>
</dbReference>
<dbReference type="PRINTS" id="PR00139">
    <property type="entry name" value="ASNGLNASE"/>
</dbReference>
<dbReference type="SMART" id="SM00870">
    <property type="entry name" value="Asparaginase"/>
    <property type="match status" value="1"/>
</dbReference>
<dbReference type="SUPFAM" id="SSF141300">
    <property type="entry name" value="GatD N-terminal domain-like"/>
    <property type="match status" value="1"/>
</dbReference>
<dbReference type="SUPFAM" id="SSF53774">
    <property type="entry name" value="Glutaminase/Asparaginase"/>
    <property type="match status" value="1"/>
</dbReference>
<dbReference type="PROSITE" id="PS00917">
    <property type="entry name" value="ASN_GLN_ASE_2"/>
    <property type="match status" value="1"/>
</dbReference>
<dbReference type="PROSITE" id="PS51732">
    <property type="entry name" value="ASN_GLN_ASE_3"/>
    <property type="match status" value="1"/>
</dbReference>
<reference key="1">
    <citation type="journal article" date="2008" name="Appl. Environ. Microbiol.">
        <title>The genome sequence of the metal-mobilizing, extremely thermoacidophilic archaeon Metallosphaera sedula provides insights into bioleaching-associated metabolism.</title>
        <authorList>
            <person name="Auernik K.S."/>
            <person name="Maezato Y."/>
            <person name="Blum P.H."/>
            <person name="Kelly R.M."/>
        </authorList>
    </citation>
    <scope>NUCLEOTIDE SEQUENCE [LARGE SCALE GENOMIC DNA]</scope>
    <source>
        <strain>ATCC 51363 / DSM 5348 / JCM 9185 / NBRC 15509 / TH2</strain>
    </source>
</reference>
<keyword id="KW-0067">ATP-binding</keyword>
<keyword id="KW-0436">Ligase</keyword>
<keyword id="KW-0547">Nucleotide-binding</keyword>
<keyword id="KW-0648">Protein biosynthesis</keyword>
<keyword id="KW-1185">Reference proteome</keyword>
<comment type="function">
    <text evidence="1">Allows the formation of correctly charged Gln-tRNA(Gln) through the transamidation of misacylated Glu-tRNA(Gln) in organisms which lack glutaminyl-tRNA synthetase. The reaction takes place in the presence of glutamine and ATP through an activated gamma-phospho-Glu-tRNA(Gln). The GatDE system is specific for glutamate and does not act on aspartate.</text>
</comment>
<comment type="catalytic activity">
    <reaction evidence="1">
        <text>L-glutamyl-tRNA(Gln) + L-glutamine + ATP + H2O = L-glutaminyl-tRNA(Gln) + L-glutamate + ADP + phosphate + H(+)</text>
        <dbReference type="Rhea" id="RHEA:17521"/>
        <dbReference type="Rhea" id="RHEA-COMP:9681"/>
        <dbReference type="Rhea" id="RHEA-COMP:9684"/>
        <dbReference type="ChEBI" id="CHEBI:15377"/>
        <dbReference type="ChEBI" id="CHEBI:15378"/>
        <dbReference type="ChEBI" id="CHEBI:29985"/>
        <dbReference type="ChEBI" id="CHEBI:30616"/>
        <dbReference type="ChEBI" id="CHEBI:43474"/>
        <dbReference type="ChEBI" id="CHEBI:58359"/>
        <dbReference type="ChEBI" id="CHEBI:78520"/>
        <dbReference type="ChEBI" id="CHEBI:78521"/>
        <dbReference type="ChEBI" id="CHEBI:456216"/>
    </reaction>
</comment>
<comment type="subunit">
    <text evidence="1">Heterodimer of GatD and GatE.</text>
</comment>
<comment type="similarity">
    <text evidence="1">Belongs to the asparaginase 1 family. GatD subfamily.</text>
</comment>
<accession>A4YHH3</accession>
<sequence>MLEGYRGKALELLSSLGAEIGDVLQVYNDKVSVKGILMPSYSRDDSVIVLKLDNGYNAGFSVNKVKVSLLEKGNRPQERSEHRELLPGKVKIISTGGTIVSKVEYETGAVRPALSTEEIIRFVPEIQEITSISAEILFSILSENMKPEFWVKIAEAVKRAFDEGSEGVVVAHGTDTMSYTAAALAFSIQRLPGPVVLVGSQRSSDRPSSDSGINLVSSVLLAKEAPFGEVVVNMHGESSDTYTLAHRGVKVRKMHTSRRDAFQSINDHPLAKVLWKERTVKVLRNDYLRRSDGVELNPKFENRVFLLKFYPGLRPDIVDILLSSGYRGIIVEGTGLGHTSSDFQEAFKRAVKEGLFVGMTSQCLFGRVNMNVYQTGRLLQQSGVVPLGDMLPEVALVKLMWALGQTSDLEEVKRIMLTNLVGEYNPRHSLDHFPRWKHE</sequence>
<proteinExistence type="inferred from homology"/>
<name>GATD_METS5</name>
<organism>
    <name type="scientific">Metallosphaera sedula (strain ATCC 51363 / DSM 5348 / JCM 9185 / NBRC 15509 / TH2)</name>
    <dbReference type="NCBI Taxonomy" id="399549"/>
    <lineage>
        <taxon>Archaea</taxon>
        <taxon>Thermoproteota</taxon>
        <taxon>Thermoprotei</taxon>
        <taxon>Sulfolobales</taxon>
        <taxon>Sulfolobaceae</taxon>
        <taxon>Metallosphaera</taxon>
    </lineage>
</organism>